<proteinExistence type="predicted"/>
<name>Y415_METJA</name>
<evidence type="ECO:0000255" key="1"/>
<evidence type="ECO:0000305" key="2"/>
<dbReference type="EMBL" id="L77117">
    <property type="protein sequence ID" value="AAB98406.1"/>
    <property type="molecule type" value="Genomic_DNA"/>
</dbReference>
<dbReference type="PIR" id="G64351">
    <property type="entry name" value="G64351"/>
</dbReference>
<dbReference type="RefSeq" id="WP_010869914.1">
    <property type="nucleotide sequence ID" value="NC_000909.1"/>
</dbReference>
<dbReference type="SMR" id="Q57858"/>
<dbReference type="FunCoup" id="Q57858">
    <property type="interactions" value="6"/>
</dbReference>
<dbReference type="STRING" id="243232.MJ_0415"/>
<dbReference type="PaxDb" id="243232-MJ_0415"/>
<dbReference type="EnsemblBacteria" id="AAB98406">
    <property type="protein sequence ID" value="AAB98406"/>
    <property type="gene ID" value="MJ_0415"/>
</dbReference>
<dbReference type="GeneID" id="1451275"/>
<dbReference type="KEGG" id="mja:MJ_0415"/>
<dbReference type="eggNOG" id="arCOG06574">
    <property type="taxonomic scope" value="Archaea"/>
</dbReference>
<dbReference type="HOGENOM" id="CLU_1656905_0_0_2"/>
<dbReference type="InParanoid" id="Q57858"/>
<dbReference type="OrthoDB" id="63958at2157"/>
<dbReference type="Proteomes" id="UP000000805">
    <property type="component" value="Chromosome"/>
</dbReference>
<dbReference type="GO" id="GO:0016020">
    <property type="term" value="C:membrane"/>
    <property type="evidence" value="ECO:0007669"/>
    <property type="project" value="UniProtKB-SubCell"/>
</dbReference>
<dbReference type="PROSITE" id="PS51257">
    <property type="entry name" value="PROKAR_LIPOPROTEIN"/>
    <property type="match status" value="1"/>
</dbReference>
<gene>
    <name type="ordered locus">MJ0415</name>
</gene>
<feature type="chain" id="PRO_0000106861" description="Uncharacterized protein MJ0415">
    <location>
        <begin position="1"/>
        <end position="162"/>
    </location>
</feature>
<feature type="transmembrane region" description="Helical" evidence="1">
    <location>
        <begin position="7"/>
        <end position="27"/>
    </location>
</feature>
<organism>
    <name type="scientific">Methanocaldococcus jannaschii (strain ATCC 43067 / DSM 2661 / JAL-1 / JCM 10045 / NBRC 100440)</name>
    <name type="common">Methanococcus jannaschii</name>
    <dbReference type="NCBI Taxonomy" id="243232"/>
    <lineage>
        <taxon>Archaea</taxon>
        <taxon>Methanobacteriati</taxon>
        <taxon>Methanobacteriota</taxon>
        <taxon>Methanomada group</taxon>
        <taxon>Methanococci</taxon>
        <taxon>Methanococcales</taxon>
        <taxon>Methanocaldococcaceae</taxon>
        <taxon>Methanocaldococcus</taxon>
    </lineage>
</organism>
<reference key="1">
    <citation type="journal article" date="1996" name="Science">
        <title>Complete genome sequence of the methanogenic archaeon, Methanococcus jannaschii.</title>
        <authorList>
            <person name="Bult C.J."/>
            <person name="White O."/>
            <person name="Olsen G.J."/>
            <person name="Zhou L."/>
            <person name="Fleischmann R.D."/>
            <person name="Sutton G.G."/>
            <person name="Blake J.A."/>
            <person name="FitzGerald L.M."/>
            <person name="Clayton R.A."/>
            <person name="Gocayne J.D."/>
            <person name="Kerlavage A.R."/>
            <person name="Dougherty B.A."/>
            <person name="Tomb J.-F."/>
            <person name="Adams M.D."/>
            <person name="Reich C.I."/>
            <person name="Overbeek R."/>
            <person name="Kirkness E.F."/>
            <person name="Weinstock K.G."/>
            <person name="Merrick J.M."/>
            <person name="Glodek A."/>
            <person name="Scott J.L."/>
            <person name="Geoghagen N.S.M."/>
            <person name="Weidman J.F."/>
            <person name="Fuhrmann J.L."/>
            <person name="Nguyen D."/>
            <person name="Utterback T.R."/>
            <person name="Kelley J.M."/>
            <person name="Peterson J.D."/>
            <person name="Sadow P.W."/>
            <person name="Hanna M.C."/>
            <person name="Cotton M.D."/>
            <person name="Roberts K.M."/>
            <person name="Hurst M.A."/>
            <person name="Kaine B.P."/>
            <person name="Borodovsky M."/>
            <person name="Klenk H.-P."/>
            <person name="Fraser C.M."/>
            <person name="Smith H.O."/>
            <person name="Woese C.R."/>
            <person name="Venter J.C."/>
        </authorList>
    </citation>
    <scope>NUCLEOTIDE SEQUENCE [LARGE SCALE GENOMIC DNA]</scope>
    <source>
        <strain>ATCC 43067 / DSM 2661 / JAL-1 / JCM 10045 / NBRC 100440</strain>
    </source>
</reference>
<protein>
    <recommendedName>
        <fullName>Uncharacterized protein MJ0415</fullName>
    </recommendedName>
</protein>
<sequence>MKRLKLLGGVMLFAIVSLMVCGCMVVFPKKYPDVLYKEYDVIKIENRTINGVKTAIVYQVKTEIGARSSPYSLDADSKKDIGAITYYVFKNTDVDEVQIICYYAGGGGLQPYYKFKIKRRDAELSGLLNVSEKELPSATLYYIDKLISLGDLWINDRLPVNG</sequence>
<keyword id="KW-0472">Membrane</keyword>
<keyword id="KW-1185">Reference proteome</keyword>
<keyword id="KW-0812">Transmembrane</keyword>
<keyword id="KW-1133">Transmembrane helix</keyword>
<accession>Q57858</accession>
<comment type="subcellular location">
    <subcellularLocation>
        <location evidence="2">Membrane</location>
        <topology evidence="2">Single-pass membrane protein</topology>
    </subcellularLocation>
</comment>